<name>RSMA_ECO7I</name>
<feature type="chain" id="PRO_1000130271" description="Ribosomal RNA small subunit methyltransferase A">
    <location>
        <begin position="1"/>
        <end position="273"/>
    </location>
</feature>
<feature type="binding site" evidence="1">
    <location>
        <position position="18"/>
    </location>
    <ligand>
        <name>S-adenosyl-L-methionine</name>
        <dbReference type="ChEBI" id="CHEBI:59789"/>
    </ligand>
</feature>
<feature type="binding site" evidence="1">
    <location>
        <position position="20"/>
    </location>
    <ligand>
        <name>S-adenosyl-L-methionine</name>
        <dbReference type="ChEBI" id="CHEBI:59789"/>
    </ligand>
</feature>
<feature type="binding site" evidence="1">
    <location>
        <position position="45"/>
    </location>
    <ligand>
        <name>S-adenosyl-L-methionine</name>
        <dbReference type="ChEBI" id="CHEBI:59789"/>
    </ligand>
</feature>
<feature type="binding site" evidence="1">
    <location>
        <position position="66"/>
    </location>
    <ligand>
        <name>S-adenosyl-L-methionine</name>
        <dbReference type="ChEBI" id="CHEBI:59789"/>
    </ligand>
</feature>
<feature type="binding site" evidence="1">
    <location>
        <position position="91"/>
    </location>
    <ligand>
        <name>S-adenosyl-L-methionine</name>
        <dbReference type="ChEBI" id="CHEBI:59789"/>
    </ligand>
</feature>
<feature type="binding site" evidence="1">
    <location>
        <position position="113"/>
    </location>
    <ligand>
        <name>S-adenosyl-L-methionine</name>
        <dbReference type="ChEBI" id="CHEBI:59789"/>
    </ligand>
</feature>
<proteinExistence type="inferred from homology"/>
<evidence type="ECO:0000255" key="1">
    <source>
        <dbReference type="HAMAP-Rule" id="MF_00607"/>
    </source>
</evidence>
<keyword id="KW-0963">Cytoplasm</keyword>
<keyword id="KW-0489">Methyltransferase</keyword>
<keyword id="KW-0694">RNA-binding</keyword>
<keyword id="KW-0698">rRNA processing</keyword>
<keyword id="KW-0949">S-adenosyl-L-methionine</keyword>
<keyword id="KW-0808">Transferase</keyword>
<sequence length="273" mass="30420">MNNRVHQGHLARKRFGQNFLNDQFVIDSIVSAINPQKGQAMVEIGPGLAALTEPVGERLDQLTVIELDRDLAARLQTHPFLGPKLTIYQQDAMTFNFGELAEKMGQPLRVFGNLPYNISTPLMFHLFSYTDAIADMHFMLQKEVVNRLVAGPNSKAYGRLSVMAQYYCNVIPVLEVPPSAFTPPPKVDSAVVRLVPHATMPHPVKDVRVLSRITTEAFNQRRKTIRNSLGNLFSVEVLTGMGIDPAMRAENISVAQYCQMANYLAENAPLQES</sequence>
<comment type="function">
    <text evidence="1">Specifically dimethylates two adjacent adenosines (A1518 and A1519) in the loop of a conserved hairpin near the 3'-end of 16S rRNA in the 30S particle. May play a critical role in biogenesis of 30S subunits.</text>
</comment>
<comment type="catalytic activity">
    <reaction evidence="1">
        <text>adenosine(1518)/adenosine(1519) in 16S rRNA + 4 S-adenosyl-L-methionine = N(6)-dimethyladenosine(1518)/N(6)-dimethyladenosine(1519) in 16S rRNA + 4 S-adenosyl-L-homocysteine + 4 H(+)</text>
        <dbReference type="Rhea" id="RHEA:19609"/>
        <dbReference type="Rhea" id="RHEA-COMP:10232"/>
        <dbReference type="Rhea" id="RHEA-COMP:10233"/>
        <dbReference type="ChEBI" id="CHEBI:15378"/>
        <dbReference type="ChEBI" id="CHEBI:57856"/>
        <dbReference type="ChEBI" id="CHEBI:59789"/>
        <dbReference type="ChEBI" id="CHEBI:74411"/>
        <dbReference type="ChEBI" id="CHEBI:74493"/>
        <dbReference type="EC" id="2.1.1.182"/>
    </reaction>
</comment>
<comment type="subcellular location">
    <subcellularLocation>
        <location evidence="1">Cytoplasm</location>
    </subcellularLocation>
</comment>
<comment type="similarity">
    <text evidence="1">Belongs to the class I-like SAM-binding methyltransferase superfamily. rRNA adenine N(6)-methyltransferase family. RsmA subfamily.</text>
</comment>
<gene>
    <name evidence="1" type="primary">rsmA</name>
    <name evidence="1" type="synonym">ksgA</name>
    <name type="ordered locus">ECIAI39_0054</name>
</gene>
<dbReference type="EC" id="2.1.1.182" evidence="1"/>
<dbReference type="EMBL" id="CU928164">
    <property type="protein sequence ID" value="CAR16195.1"/>
    <property type="molecule type" value="Genomic_DNA"/>
</dbReference>
<dbReference type="RefSeq" id="WP_001065381.1">
    <property type="nucleotide sequence ID" value="NC_011750.1"/>
</dbReference>
<dbReference type="RefSeq" id="YP_002406102.1">
    <property type="nucleotide sequence ID" value="NC_011750.1"/>
</dbReference>
<dbReference type="SMR" id="B7NHF7"/>
<dbReference type="STRING" id="585057.ECIAI39_0054"/>
<dbReference type="GeneID" id="93777384"/>
<dbReference type="KEGG" id="ect:ECIAI39_0054"/>
<dbReference type="PATRIC" id="fig|585057.6.peg.58"/>
<dbReference type="HOGENOM" id="CLU_041220_0_1_6"/>
<dbReference type="Proteomes" id="UP000000749">
    <property type="component" value="Chromosome"/>
</dbReference>
<dbReference type="GO" id="GO:0005829">
    <property type="term" value="C:cytosol"/>
    <property type="evidence" value="ECO:0007669"/>
    <property type="project" value="TreeGrafter"/>
</dbReference>
<dbReference type="GO" id="GO:0052908">
    <property type="term" value="F:16S rRNA (adenine(1518)-N(6)/adenine(1519)-N(6))-dimethyltransferase activity"/>
    <property type="evidence" value="ECO:0007669"/>
    <property type="project" value="UniProtKB-EC"/>
</dbReference>
<dbReference type="GO" id="GO:0003723">
    <property type="term" value="F:RNA binding"/>
    <property type="evidence" value="ECO:0007669"/>
    <property type="project" value="UniProtKB-KW"/>
</dbReference>
<dbReference type="FunFam" id="1.10.8.100:FF:000001">
    <property type="entry name" value="Ribosomal RNA small subunit methyltransferase A"/>
    <property type="match status" value="1"/>
</dbReference>
<dbReference type="FunFam" id="3.40.50.150:FF:000006">
    <property type="entry name" value="Ribosomal RNA small subunit methyltransferase A"/>
    <property type="match status" value="1"/>
</dbReference>
<dbReference type="Gene3D" id="1.10.8.100">
    <property type="entry name" value="Ribosomal RNA adenine dimethylase-like, domain 2"/>
    <property type="match status" value="1"/>
</dbReference>
<dbReference type="Gene3D" id="3.40.50.150">
    <property type="entry name" value="Vaccinia Virus protein VP39"/>
    <property type="match status" value="1"/>
</dbReference>
<dbReference type="HAMAP" id="MF_00607">
    <property type="entry name" value="16SrRNA_methyltr_A"/>
    <property type="match status" value="1"/>
</dbReference>
<dbReference type="InterPro" id="IPR001737">
    <property type="entry name" value="KsgA/Erm"/>
</dbReference>
<dbReference type="InterPro" id="IPR023165">
    <property type="entry name" value="rRNA_Ade_diMease-like_C"/>
</dbReference>
<dbReference type="InterPro" id="IPR020596">
    <property type="entry name" value="rRNA_Ade_Mease_Trfase_CS"/>
</dbReference>
<dbReference type="InterPro" id="IPR020598">
    <property type="entry name" value="rRNA_Ade_methylase_Trfase_N"/>
</dbReference>
<dbReference type="InterPro" id="IPR011530">
    <property type="entry name" value="rRNA_adenine_dimethylase"/>
</dbReference>
<dbReference type="InterPro" id="IPR029063">
    <property type="entry name" value="SAM-dependent_MTases_sf"/>
</dbReference>
<dbReference type="NCBIfam" id="TIGR00755">
    <property type="entry name" value="ksgA"/>
    <property type="match status" value="1"/>
</dbReference>
<dbReference type="PANTHER" id="PTHR11727">
    <property type="entry name" value="DIMETHYLADENOSINE TRANSFERASE"/>
    <property type="match status" value="1"/>
</dbReference>
<dbReference type="PANTHER" id="PTHR11727:SF7">
    <property type="entry name" value="DIMETHYLADENOSINE TRANSFERASE-RELATED"/>
    <property type="match status" value="1"/>
</dbReference>
<dbReference type="Pfam" id="PF00398">
    <property type="entry name" value="RrnaAD"/>
    <property type="match status" value="1"/>
</dbReference>
<dbReference type="SMART" id="SM00650">
    <property type="entry name" value="rADc"/>
    <property type="match status" value="1"/>
</dbReference>
<dbReference type="SUPFAM" id="SSF53335">
    <property type="entry name" value="S-adenosyl-L-methionine-dependent methyltransferases"/>
    <property type="match status" value="1"/>
</dbReference>
<dbReference type="PROSITE" id="PS01131">
    <property type="entry name" value="RRNA_A_DIMETH"/>
    <property type="match status" value="1"/>
</dbReference>
<dbReference type="PROSITE" id="PS51689">
    <property type="entry name" value="SAM_RNA_A_N6_MT"/>
    <property type="match status" value="1"/>
</dbReference>
<organism>
    <name type="scientific">Escherichia coli O7:K1 (strain IAI39 / ExPEC)</name>
    <dbReference type="NCBI Taxonomy" id="585057"/>
    <lineage>
        <taxon>Bacteria</taxon>
        <taxon>Pseudomonadati</taxon>
        <taxon>Pseudomonadota</taxon>
        <taxon>Gammaproteobacteria</taxon>
        <taxon>Enterobacterales</taxon>
        <taxon>Enterobacteriaceae</taxon>
        <taxon>Escherichia</taxon>
    </lineage>
</organism>
<protein>
    <recommendedName>
        <fullName evidence="1">Ribosomal RNA small subunit methyltransferase A</fullName>
        <ecNumber evidence="1">2.1.1.182</ecNumber>
    </recommendedName>
    <alternativeName>
        <fullName evidence="1">16S rRNA (adenine(1518)-N(6)/adenine(1519)-N(6))-dimethyltransferase</fullName>
    </alternativeName>
    <alternativeName>
        <fullName evidence="1">16S rRNA dimethyladenosine transferase</fullName>
    </alternativeName>
    <alternativeName>
        <fullName evidence="1">16S rRNA dimethylase</fullName>
    </alternativeName>
    <alternativeName>
        <fullName evidence="1">S-adenosylmethionine-6-N', N'-adenosyl(rRNA) dimethyltransferase</fullName>
    </alternativeName>
</protein>
<reference key="1">
    <citation type="journal article" date="2009" name="PLoS Genet.">
        <title>Organised genome dynamics in the Escherichia coli species results in highly diverse adaptive paths.</title>
        <authorList>
            <person name="Touchon M."/>
            <person name="Hoede C."/>
            <person name="Tenaillon O."/>
            <person name="Barbe V."/>
            <person name="Baeriswyl S."/>
            <person name="Bidet P."/>
            <person name="Bingen E."/>
            <person name="Bonacorsi S."/>
            <person name="Bouchier C."/>
            <person name="Bouvet O."/>
            <person name="Calteau A."/>
            <person name="Chiapello H."/>
            <person name="Clermont O."/>
            <person name="Cruveiller S."/>
            <person name="Danchin A."/>
            <person name="Diard M."/>
            <person name="Dossat C."/>
            <person name="Karoui M.E."/>
            <person name="Frapy E."/>
            <person name="Garry L."/>
            <person name="Ghigo J.M."/>
            <person name="Gilles A.M."/>
            <person name="Johnson J."/>
            <person name="Le Bouguenec C."/>
            <person name="Lescat M."/>
            <person name="Mangenot S."/>
            <person name="Martinez-Jehanne V."/>
            <person name="Matic I."/>
            <person name="Nassif X."/>
            <person name="Oztas S."/>
            <person name="Petit M.A."/>
            <person name="Pichon C."/>
            <person name="Rouy Z."/>
            <person name="Ruf C.S."/>
            <person name="Schneider D."/>
            <person name="Tourret J."/>
            <person name="Vacherie B."/>
            <person name="Vallenet D."/>
            <person name="Medigue C."/>
            <person name="Rocha E.P.C."/>
            <person name="Denamur E."/>
        </authorList>
    </citation>
    <scope>NUCLEOTIDE SEQUENCE [LARGE SCALE GENOMIC DNA]</scope>
    <source>
        <strain>IAI39 / ExPEC</strain>
    </source>
</reference>
<accession>B7NHF7</accession>